<protein>
    <recommendedName>
        <fullName evidence="1">NAD kinase</fullName>
        <ecNumber evidence="1">2.7.1.23</ecNumber>
    </recommendedName>
    <alternativeName>
        <fullName evidence="1">ATP-dependent NAD kinase</fullName>
    </alternativeName>
</protein>
<proteinExistence type="inferred from homology"/>
<comment type="function">
    <text evidence="1">Involved in the regulation of the intracellular balance of NAD and NADP, and is a key enzyme in the biosynthesis of NADP. Catalyzes specifically the phosphorylation on 2'-hydroxyl of the adenosine moiety of NAD to yield NADP.</text>
</comment>
<comment type="catalytic activity">
    <reaction evidence="1">
        <text>NAD(+) + ATP = ADP + NADP(+) + H(+)</text>
        <dbReference type="Rhea" id="RHEA:18629"/>
        <dbReference type="ChEBI" id="CHEBI:15378"/>
        <dbReference type="ChEBI" id="CHEBI:30616"/>
        <dbReference type="ChEBI" id="CHEBI:57540"/>
        <dbReference type="ChEBI" id="CHEBI:58349"/>
        <dbReference type="ChEBI" id="CHEBI:456216"/>
        <dbReference type="EC" id="2.7.1.23"/>
    </reaction>
</comment>
<comment type="cofactor">
    <cofactor evidence="1">
        <name>a divalent metal cation</name>
        <dbReference type="ChEBI" id="CHEBI:60240"/>
    </cofactor>
</comment>
<comment type="subcellular location">
    <subcellularLocation>
        <location evidence="1">Cytoplasm</location>
    </subcellularLocation>
</comment>
<comment type="similarity">
    <text evidence="1">Belongs to the NAD kinase family.</text>
</comment>
<evidence type="ECO:0000255" key="1">
    <source>
        <dbReference type="HAMAP-Rule" id="MF_00361"/>
    </source>
</evidence>
<name>NADK_FLAPJ</name>
<feature type="chain" id="PRO_1000059867" description="NAD kinase">
    <location>
        <begin position="1"/>
        <end position="294"/>
    </location>
</feature>
<feature type="active site" description="Proton acceptor" evidence="1">
    <location>
        <position position="74"/>
    </location>
</feature>
<feature type="binding site" evidence="1">
    <location>
        <begin position="74"/>
        <end position="75"/>
    </location>
    <ligand>
        <name>NAD(+)</name>
        <dbReference type="ChEBI" id="CHEBI:57540"/>
    </ligand>
</feature>
<feature type="binding site" evidence="1">
    <location>
        <position position="79"/>
    </location>
    <ligand>
        <name>NAD(+)</name>
        <dbReference type="ChEBI" id="CHEBI:57540"/>
    </ligand>
</feature>
<feature type="binding site" evidence="1">
    <location>
        <begin position="149"/>
        <end position="150"/>
    </location>
    <ligand>
        <name>NAD(+)</name>
        <dbReference type="ChEBI" id="CHEBI:57540"/>
    </ligand>
</feature>
<feature type="binding site" evidence="1">
    <location>
        <position position="179"/>
    </location>
    <ligand>
        <name>NAD(+)</name>
        <dbReference type="ChEBI" id="CHEBI:57540"/>
    </ligand>
</feature>
<feature type="binding site" evidence="1">
    <location>
        <begin position="190"/>
        <end position="195"/>
    </location>
    <ligand>
        <name>NAD(+)</name>
        <dbReference type="ChEBI" id="CHEBI:57540"/>
    </ligand>
</feature>
<feature type="binding site" evidence="1">
    <location>
        <position position="214"/>
    </location>
    <ligand>
        <name>NAD(+)</name>
        <dbReference type="ChEBI" id="CHEBI:57540"/>
    </ligand>
</feature>
<organism>
    <name type="scientific">Flavobacterium psychrophilum (strain ATCC 49511 / DSM 21280 / CIP 103535 / JIP02/86)</name>
    <dbReference type="NCBI Taxonomy" id="402612"/>
    <lineage>
        <taxon>Bacteria</taxon>
        <taxon>Pseudomonadati</taxon>
        <taxon>Bacteroidota</taxon>
        <taxon>Flavobacteriia</taxon>
        <taxon>Flavobacteriales</taxon>
        <taxon>Flavobacteriaceae</taxon>
        <taxon>Flavobacterium</taxon>
    </lineage>
</organism>
<accession>A6H1D1</accession>
<sequence>MKIAVFGQFYQNSTSPIIARLFAFLNQNNIQVVIEEKFAAILIENKSIANTYQKFSSHKDLDKSFEMLISVGGDGTFLRATTLVRNSGIPILGINAGRLGFLATVQQENIETFLQLVLEKKYTISKRTLLSLKCASKIEEIKDLNFAMNEITVSRKDTTSMITIETYLNGEYLNSYWADGLIISTPTGSTGYSMSCGGPILTPEANCLVITPIAPHNLNARPLVIPDNTEIKLKVSGREENYLVSLDSRIASVKNEDILTIKKTPFKINMIEIPEETFLKTLRNKLLWGEDKRN</sequence>
<gene>
    <name evidence="1" type="primary">nadK</name>
    <name type="ordered locus">FP2093</name>
</gene>
<dbReference type="EC" id="2.7.1.23" evidence="1"/>
<dbReference type="EMBL" id="AM398681">
    <property type="protein sequence ID" value="CAL44155.1"/>
    <property type="molecule type" value="Genomic_DNA"/>
</dbReference>
<dbReference type="RefSeq" id="WP_011964192.1">
    <property type="nucleotide sequence ID" value="NC_009613.3"/>
</dbReference>
<dbReference type="RefSeq" id="YP_001296957.1">
    <property type="nucleotide sequence ID" value="NC_009613.3"/>
</dbReference>
<dbReference type="SMR" id="A6H1D1"/>
<dbReference type="STRING" id="402612.FP2093"/>
<dbReference type="EnsemblBacteria" id="CAL44155">
    <property type="protein sequence ID" value="CAL44155"/>
    <property type="gene ID" value="FP2093"/>
</dbReference>
<dbReference type="KEGG" id="fps:FP2093"/>
<dbReference type="PATRIC" id="fig|402612.5.peg.2120"/>
<dbReference type="eggNOG" id="COG0061">
    <property type="taxonomic scope" value="Bacteria"/>
</dbReference>
<dbReference type="HOGENOM" id="CLU_008831_0_3_10"/>
<dbReference type="OrthoDB" id="9774737at2"/>
<dbReference type="Proteomes" id="UP000006394">
    <property type="component" value="Chromosome"/>
</dbReference>
<dbReference type="GO" id="GO:0005737">
    <property type="term" value="C:cytoplasm"/>
    <property type="evidence" value="ECO:0007669"/>
    <property type="project" value="UniProtKB-SubCell"/>
</dbReference>
<dbReference type="GO" id="GO:0005524">
    <property type="term" value="F:ATP binding"/>
    <property type="evidence" value="ECO:0007669"/>
    <property type="project" value="UniProtKB-KW"/>
</dbReference>
<dbReference type="GO" id="GO:0046872">
    <property type="term" value="F:metal ion binding"/>
    <property type="evidence" value="ECO:0007669"/>
    <property type="project" value="UniProtKB-UniRule"/>
</dbReference>
<dbReference type="GO" id="GO:0051287">
    <property type="term" value="F:NAD binding"/>
    <property type="evidence" value="ECO:0007669"/>
    <property type="project" value="UniProtKB-ARBA"/>
</dbReference>
<dbReference type="GO" id="GO:0003951">
    <property type="term" value="F:NAD+ kinase activity"/>
    <property type="evidence" value="ECO:0007669"/>
    <property type="project" value="UniProtKB-UniRule"/>
</dbReference>
<dbReference type="GO" id="GO:0019674">
    <property type="term" value="P:NAD metabolic process"/>
    <property type="evidence" value="ECO:0007669"/>
    <property type="project" value="InterPro"/>
</dbReference>
<dbReference type="GO" id="GO:0006741">
    <property type="term" value="P:NADP biosynthetic process"/>
    <property type="evidence" value="ECO:0007669"/>
    <property type="project" value="UniProtKB-UniRule"/>
</dbReference>
<dbReference type="FunFam" id="2.60.200.30:FF:000009">
    <property type="entry name" value="Poly(P)/ATP NAD kinase"/>
    <property type="match status" value="1"/>
</dbReference>
<dbReference type="Gene3D" id="3.40.50.10330">
    <property type="entry name" value="Probable inorganic polyphosphate/atp-NAD kinase, domain 1"/>
    <property type="match status" value="1"/>
</dbReference>
<dbReference type="Gene3D" id="2.60.200.30">
    <property type="entry name" value="Probable inorganic polyphosphate/atp-NAD kinase, domain 2"/>
    <property type="match status" value="1"/>
</dbReference>
<dbReference type="HAMAP" id="MF_00361">
    <property type="entry name" value="NAD_kinase"/>
    <property type="match status" value="1"/>
</dbReference>
<dbReference type="InterPro" id="IPR017438">
    <property type="entry name" value="ATP-NAD_kinase_N"/>
</dbReference>
<dbReference type="InterPro" id="IPR017437">
    <property type="entry name" value="ATP-NAD_kinase_PpnK-typ_C"/>
</dbReference>
<dbReference type="InterPro" id="IPR016064">
    <property type="entry name" value="NAD/diacylglycerol_kinase_sf"/>
</dbReference>
<dbReference type="InterPro" id="IPR002504">
    <property type="entry name" value="NADK"/>
</dbReference>
<dbReference type="NCBIfam" id="NF002521">
    <property type="entry name" value="PRK01911.1"/>
    <property type="match status" value="1"/>
</dbReference>
<dbReference type="PANTHER" id="PTHR20275">
    <property type="entry name" value="NAD KINASE"/>
    <property type="match status" value="1"/>
</dbReference>
<dbReference type="PANTHER" id="PTHR20275:SF0">
    <property type="entry name" value="NAD KINASE"/>
    <property type="match status" value="1"/>
</dbReference>
<dbReference type="Pfam" id="PF01513">
    <property type="entry name" value="NAD_kinase"/>
    <property type="match status" value="1"/>
</dbReference>
<dbReference type="Pfam" id="PF20143">
    <property type="entry name" value="NAD_kinase_C"/>
    <property type="match status" value="1"/>
</dbReference>
<dbReference type="SUPFAM" id="SSF111331">
    <property type="entry name" value="NAD kinase/diacylglycerol kinase-like"/>
    <property type="match status" value="1"/>
</dbReference>
<keyword id="KW-0067">ATP-binding</keyword>
<keyword id="KW-0963">Cytoplasm</keyword>
<keyword id="KW-0418">Kinase</keyword>
<keyword id="KW-0520">NAD</keyword>
<keyword id="KW-0521">NADP</keyword>
<keyword id="KW-0547">Nucleotide-binding</keyword>
<keyword id="KW-1185">Reference proteome</keyword>
<keyword id="KW-0808">Transferase</keyword>
<reference key="1">
    <citation type="journal article" date="2007" name="Nat. Biotechnol.">
        <title>Complete genome sequence of the fish pathogen Flavobacterium psychrophilum.</title>
        <authorList>
            <person name="Duchaud E."/>
            <person name="Boussaha M."/>
            <person name="Loux V."/>
            <person name="Bernardet J.-F."/>
            <person name="Michel C."/>
            <person name="Kerouault B."/>
            <person name="Mondot S."/>
            <person name="Nicolas P."/>
            <person name="Bossy R."/>
            <person name="Caron C."/>
            <person name="Bessieres P."/>
            <person name="Gibrat J.-F."/>
            <person name="Claverol S."/>
            <person name="Dumetz F."/>
            <person name="Le Henaff M."/>
            <person name="Benmansour A."/>
        </authorList>
    </citation>
    <scope>NUCLEOTIDE SEQUENCE [LARGE SCALE GENOMIC DNA]</scope>
    <source>
        <strain>ATCC 49511 / DSM 21280 / CIP 103535 / JIP02/86</strain>
    </source>
</reference>